<dbReference type="EC" id="2.4.2.1" evidence="1"/>
<dbReference type="EC" id="2.4.2.2" evidence="1"/>
<dbReference type="EMBL" id="CP001396">
    <property type="protein sequence ID" value="ACR62434.1"/>
    <property type="molecule type" value="Genomic_DNA"/>
</dbReference>
<dbReference type="RefSeq" id="WP_000941942.1">
    <property type="nucleotide sequence ID" value="NC_012759.1"/>
</dbReference>
<dbReference type="SMR" id="C4ZTF0"/>
<dbReference type="GeneID" id="93777070"/>
<dbReference type="KEGG" id="ebw:BWG_0275"/>
<dbReference type="HOGENOM" id="CLU_157874_0_0_6"/>
<dbReference type="GO" id="GO:0005829">
    <property type="term" value="C:cytosol"/>
    <property type="evidence" value="ECO:0007669"/>
    <property type="project" value="TreeGrafter"/>
</dbReference>
<dbReference type="GO" id="GO:0047975">
    <property type="term" value="F:guanosine phosphorylase activity"/>
    <property type="evidence" value="ECO:0007669"/>
    <property type="project" value="UniProtKB-EC"/>
</dbReference>
<dbReference type="GO" id="GO:0004731">
    <property type="term" value="F:purine-nucleoside phosphorylase activity"/>
    <property type="evidence" value="ECO:0007669"/>
    <property type="project" value="UniProtKB-UniRule"/>
</dbReference>
<dbReference type="GO" id="GO:0009032">
    <property type="term" value="F:thymidine phosphorylase activity"/>
    <property type="evidence" value="ECO:0007669"/>
    <property type="project" value="UniProtKB-EC"/>
</dbReference>
<dbReference type="GO" id="GO:0004850">
    <property type="term" value="F:uridine phosphorylase activity"/>
    <property type="evidence" value="ECO:0007669"/>
    <property type="project" value="UniProtKB-EC"/>
</dbReference>
<dbReference type="CDD" id="cd20296">
    <property type="entry name" value="cupin_PpnP-like"/>
    <property type="match status" value="1"/>
</dbReference>
<dbReference type="FunFam" id="2.60.120.10:FF:000016">
    <property type="entry name" value="Pyrimidine/purine nucleoside phosphorylase"/>
    <property type="match status" value="1"/>
</dbReference>
<dbReference type="Gene3D" id="2.60.120.10">
    <property type="entry name" value="Jelly Rolls"/>
    <property type="match status" value="1"/>
</dbReference>
<dbReference type="HAMAP" id="MF_01537">
    <property type="entry name" value="Nucleos_phosphorylase_PpnP"/>
    <property type="match status" value="1"/>
</dbReference>
<dbReference type="InterPro" id="IPR009664">
    <property type="entry name" value="Ppnp"/>
</dbReference>
<dbReference type="InterPro" id="IPR014710">
    <property type="entry name" value="RmlC-like_jellyroll"/>
</dbReference>
<dbReference type="InterPro" id="IPR011051">
    <property type="entry name" value="RmlC_Cupin_sf"/>
</dbReference>
<dbReference type="NCBIfam" id="NF007875">
    <property type="entry name" value="PRK10579.1"/>
    <property type="match status" value="1"/>
</dbReference>
<dbReference type="PANTHER" id="PTHR36540">
    <property type="entry name" value="PYRIMIDINE/PURINE NUCLEOSIDE PHOSPHORYLASE"/>
    <property type="match status" value="1"/>
</dbReference>
<dbReference type="PANTHER" id="PTHR36540:SF1">
    <property type="entry name" value="PYRIMIDINE_PURINE NUCLEOSIDE PHOSPHORYLASE"/>
    <property type="match status" value="1"/>
</dbReference>
<dbReference type="Pfam" id="PF06865">
    <property type="entry name" value="Ppnp"/>
    <property type="match status" value="1"/>
</dbReference>
<dbReference type="SUPFAM" id="SSF51182">
    <property type="entry name" value="RmlC-like cupins"/>
    <property type="match status" value="1"/>
</dbReference>
<comment type="function">
    <text evidence="1">Catalyzes the phosphorolysis of diverse nucleosides, yielding D-ribose 1-phosphate and the respective free bases. Can use uridine, adenosine, guanosine, cytidine, thymidine, inosine and xanthosine as substrates. Also catalyzes the reverse reactions.</text>
</comment>
<comment type="catalytic activity">
    <reaction evidence="1">
        <text>a purine D-ribonucleoside + phosphate = a purine nucleobase + alpha-D-ribose 1-phosphate</text>
        <dbReference type="Rhea" id="RHEA:19805"/>
        <dbReference type="ChEBI" id="CHEBI:26386"/>
        <dbReference type="ChEBI" id="CHEBI:43474"/>
        <dbReference type="ChEBI" id="CHEBI:57720"/>
        <dbReference type="ChEBI" id="CHEBI:142355"/>
        <dbReference type="EC" id="2.4.2.1"/>
    </reaction>
</comment>
<comment type="catalytic activity">
    <reaction evidence="1">
        <text>adenosine + phosphate = alpha-D-ribose 1-phosphate + adenine</text>
        <dbReference type="Rhea" id="RHEA:27642"/>
        <dbReference type="ChEBI" id="CHEBI:16335"/>
        <dbReference type="ChEBI" id="CHEBI:16708"/>
        <dbReference type="ChEBI" id="CHEBI:43474"/>
        <dbReference type="ChEBI" id="CHEBI:57720"/>
        <dbReference type="EC" id="2.4.2.1"/>
    </reaction>
</comment>
<comment type="catalytic activity">
    <reaction evidence="1">
        <text>cytidine + phosphate = cytosine + alpha-D-ribose 1-phosphate</text>
        <dbReference type="Rhea" id="RHEA:52540"/>
        <dbReference type="ChEBI" id="CHEBI:16040"/>
        <dbReference type="ChEBI" id="CHEBI:17562"/>
        <dbReference type="ChEBI" id="CHEBI:43474"/>
        <dbReference type="ChEBI" id="CHEBI:57720"/>
        <dbReference type="EC" id="2.4.2.2"/>
    </reaction>
</comment>
<comment type="catalytic activity">
    <reaction evidence="1">
        <text>guanosine + phosphate = alpha-D-ribose 1-phosphate + guanine</text>
        <dbReference type="Rhea" id="RHEA:13233"/>
        <dbReference type="ChEBI" id="CHEBI:16235"/>
        <dbReference type="ChEBI" id="CHEBI:16750"/>
        <dbReference type="ChEBI" id="CHEBI:43474"/>
        <dbReference type="ChEBI" id="CHEBI:57720"/>
        <dbReference type="EC" id="2.4.2.1"/>
    </reaction>
</comment>
<comment type="catalytic activity">
    <reaction evidence="1">
        <text>inosine + phosphate = alpha-D-ribose 1-phosphate + hypoxanthine</text>
        <dbReference type="Rhea" id="RHEA:27646"/>
        <dbReference type="ChEBI" id="CHEBI:17368"/>
        <dbReference type="ChEBI" id="CHEBI:17596"/>
        <dbReference type="ChEBI" id="CHEBI:43474"/>
        <dbReference type="ChEBI" id="CHEBI:57720"/>
        <dbReference type="EC" id="2.4.2.1"/>
    </reaction>
</comment>
<comment type="catalytic activity">
    <reaction evidence="1">
        <text>thymidine + phosphate = 2-deoxy-alpha-D-ribose 1-phosphate + thymine</text>
        <dbReference type="Rhea" id="RHEA:16037"/>
        <dbReference type="ChEBI" id="CHEBI:17748"/>
        <dbReference type="ChEBI" id="CHEBI:17821"/>
        <dbReference type="ChEBI" id="CHEBI:43474"/>
        <dbReference type="ChEBI" id="CHEBI:57259"/>
        <dbReference type="EC" id="2.4.2.2"/>
    </reaction>
</comment>
<comment type="catalytic activity">
    <reaction evidence="1">
        <text>uridine + phosphate = alpha-D-ribose 1-phosphate + uracil</text>
        <dbReference type="Rhea" id="RHEA:24388"/>
        <dbReference type="ChEBI" id="CHEBI:16704"/>
        <dbReference type="ChEBI" id="CHEBI:17568"/>
        <dbReference type="ChEBI" id="CHEBI:43474"/>
        <dbReference type="ChEBI" id="CHEBI:57720"/>
        <dbReference type="EC" id="2.4.2.2"/>
    </reaction>
</comment>
<comment type="catalytic activity">
    <reaction evidence="1">
        <text>xanthosine + phosphate = alpha-D-ribose 1-phosphate + xanthine</text>
        <dbReference type="Rhea" id="RHEA:27638"/>
        <dbReference type="ChEBI" id="CHEBI:17712"/>
        <dbReference type="ChEBI" id="CHEBI:18107"/>
        <dbReference type="ChEBI" id="CHEBI:43474"/>
        <dbReference type="ChEBI" id="CHEBI:57720"/>
        <dbReference type="EC" id="2.4.2.1"/>
    </reaction>
</comment>
<comment type="similarity">
    <text evidence="1">Belongs to the nucleoside phosphorylase PpnP family.</text>
</comment>
<gene>
    <name evidence="1" type="primary">ppnP</name>
    <name type="ordered locus">BWG_0275</name>
</gene>
<proteinExistence type="inferred from homology"/>
<sequence>MLQSNEYFSGKVKSIGFSSSSTGRASVGVMVEGEYTFSTAEPEEMTVISGALNVLLPDATDWQVYEAGSVFNVPGHSEFHLQVAEPTSYLCRYL</sequence>
<evidence type="ECO:0000255" key="1">
    <source>
        <dbReference type="HAMAP-Rule" id="MF_01537"/>
    </source>
</evidence>
<reference key="1">
    <citation type="journal article" date="2009" name="J. Bacteriol.">
        <title>Genomic sequencing reveals regulatory mutations and recombinational events in the widely used MC4100 lineage of Escherichia coli K-12.</title>
        <authorList>
            <person name="Ferenci T."/>
            <person name="Zhou Z."/>
            <person name="Betteridge T."/>
            <person name="Ren Y."/>
            <person name="Liu Y."/>
            <person name="Feng L."/>
            <person name="Reeves P.R."/>
            <person name="Wang L."/>
        </authorList>
    </citation>
    <scope>NUCLEOTIDE SEQUENCE [LARGE SCALE GENOMIC DNA]</scope>
    <source>
        <strain>K12 / MC4100 / BW2952</strain>
    </source>
</reference>
<accession>C4ZTF0</accession>
<protein>
    <recommendedName>
        <fullName evidence="1">Pyrimidine/purine nucleoside phosphorylase</fullName>
        <ecNumber evidence="1">2.4.2.1</ecNumber>
        <ecNumber evidence="1">2.4.2.2</ecNumber>
    </recommendedName>
    <alternativeName>
        <fullName evidence="1">Adenosine phosphorylase</fullName>
    </alternativeName>
    <alternativeName>
        <fullName evidence="1">Cytidine phosphorylase</fullName>
    </alternativeName>
    <alternativeName>
        <fullName evidence="1">Guanosine phosphorylase</fullName>
    </alternativeName>
    <alternativeName>
        <fullName evidence="1">Inosine phosphorylase</fullName>
    </alternativeName>
    <alternativeName>
        <fullName evidence="1">Thymidine phosphorylase</fullName>
    </alternativeName>
    <alternativeName>
        <fullName evidence="1">Uridine phosphorylase</fullName>
    </alternativeName>
    <alternativeName>
        <fullName evidence="1">Xanthosine phosphorylase</fullName>
    </alternativeName>
</protein>
<organism>
    <name type="scientific">Escherichia coli (strain K12 / MC4100 / BW2952)</name>
    <dbReference type="NCBI Taxonomy" id="595496"/>
    <lineage>
        <taxon>Bacteria</taxon>
        <taxon>Pseudomonadati</taxon>
        <taxon>Pseudomonadota</taxon>
        <taxon>Gammaproteobacteria</taxon>
        <taxon>Enterobacterales</taxon>
        <taxon>Enterobacteriaceae</taxon>
        <taxon>Escherichia</taxon>
    </lineage>
</organism>
<feature type="chain" id="PRO_1000215412" description="Pyrimidine/purine nucleoside phosphorylase">
    <location>
        <begin position="1"/>
        <end position="94"/>
    </location>
</feature>
<name>PPNP_ECOBW</name>
<keyword id="KW-0328">Glycosyltransferase</keyword>
<keyword id="KW-0808">Transferase</keyword>